<feature type="signal peptide" evidence="2">
    <location>
        <begin position="1"/>
        <end position="19"/>
    </location>
</feature>
<feature type="chain" id="PRO_5004879603" description="FAD-dependent monooxygenase prx3">
    <location>
        <begin position="20"/>
        <end position="512"/>
    </location>
</feature>
<feature type="domain" description="FAD-binding PCMH-type" evidence="4">
    <location>
        <begin position="63"/>
        <end position="235"/>
    </location>
</feature>
<feature type="modified residue" description="Pros-8alpha-FAD histidine" evidence="1">
    <location>
        <position position="100"/>
    </location>
</feature>
<feature type="glycosylation site" description="N-linked (GlcNAc...) asparagine" evidence="3">
    <location>
        <position position="197"/>
    </location>
</feature>
<feature type="glycosylation site" description="N-linked (GlcNAc...) asparagine" evidence="3">
    <location>
        <position position="281"/>
    </location>
</feature>
<feature type="glycosylation site" description="N-linked (GlcNAc...) asparagine" evidence="3">
    <location>
        <position position="307"/>
    </location>
</feature>
<feature type="glycosylation site" description="N-linked (GlcNAc...) asparagine" evidence="3">
    <location>
        <position position="329"/>
    </location>
</feature>
<feature type="glycosylation site" description="N-linked (GlcNAc...) asparagine" evidence="3">
    <location>
        <position position="361"/>
    </location>
</feature>
<feature type="glycosylation site" description="N-linked (GlcNAc...) asparagine" evidence="3">
    <location>
        <position position="477"/>
    </location>
</feature>
<evidence type="ECO:0000250" key="1">
    <source>
        <dbReference type="UniProtKB" id="P08159"/>
    </source>
</evidence>
<evidence type="ECO:0000255" key="2"/>
<evidence type="ECO:0000255" key="3">
    <source>
        <dbReference type="PROSITE-ProRule" id="PRU00498"/>
    </source>
</evidence>
<evidence type="ECO:0000255" key="4">
    <source>
        <dbReference type="PROSITE-ProRule" id="PRU00718"/>
    </source>
</evidence>
<evidence type="ECO:0000269" key="5">
    <source>
    </source>
</evidence>
<evidence type="ECO:0000269" key="6">
    <source>
    </source>
</evidence>
<evidence type="ECO:0000269" key="7">
    <source>
    </source>
</evidence>
<evidence type="ECO:0000269" key="8">
    <source>
    </source>
</evidence>
<evidence type="ECO:0000269" key="9">
    <source>
    </source>
</evidence>
<evidence type="ECO:0000269" key="10">
    <source>
    </source>
</evidence>
<evidence type="ECO:0000303" key="11">
    <source>
    </source>
</evidence>
<evidence type="ECO:0000303" key="12">
    <source>
    </source>
</evidence>
<evidence type="ECO:0000305" key="13"/>
<evidence type="ECO:0000305" key="14">
    <source>
    </source>
</evidence>
<evidence type="ECO:0000305" key="15">
    <source>
    </source>
</evidence>
<name>PRX3_PENRF</name>
<protein>
    <recommendedName>
        <fullName evidence="11">FAD-dependent monooxygenase prx3</fullName>
        <ecNumber evidence="14">1.-.-.-</ecNumber>
    </recommendedName>
    <alternativeName>
        <fullName evidence="11">PR-toxin biosynthesis cluster protein 3</fullName>
    </alternativeName>
</protein>
<reference key="1">
    <citation type="journal article" date="2014" name="Nat. Commun.">
        <title>Multiple recent horizontal transfers of a large genomic region in cheese making fungi.</title>
        <authorList>
            <person name="Cheeseman K."/>
            <person name="Ropars J."/>
            <person name="Renault P."/>
            <person name="Dupont J."/>
            <person name="Gouzy J."/>
            <person name="Branca A."/>
            <person name="Abraham A.-L."/>
            <person name="Ceppi M."/>
            <person name="Conseiller E."/>
            <person name="Debuchy R."/>
            <person name="Malagnac F."/>
            <person name="Goarin A."/>
            <person name="Silar P."/>
            <person name="Lacoste S."/>
            <person name="Sallet E."/>
            <person name="Bensimon A."/>
            <person name="Giraud T."/>
            <person name="Brygoo Y."/>
        </authorList>
    </citation>
    <scope>NUCLEOTIDE SEQUENCE [LARGE SCALE GENOMIC DNA]</scope>
    <source>
        <strain>FM164</strain>
    </source>
</reference>
<reference key="2">
    <citation type="journal article" date="1980" name="Appl. Environ. Microbiol.">
        <title>Production of eremofortins A, B, and C relative to formation of PR toxin by Penicillium roqueforti.</title>
        <authorList>
            <person name="Moreau S."/>
            <person name="Lablache-Combier A."/>
            <person name="Biguet J."/>
        </authorList>
    </citation>
    <scope>FUNCTION</scope>
</reference>
<reference key="3">
    <citation type="journal article" date="1993" name="J. Biol. Chem.">
        <title>Aristolochene synthase. Isolation, characterization, and bacterial expression of a sesquiterpenoid biosynthetic gene (Ari1) from Penicillium roqueforti.</title>
        <authorList>
            <person name="Proctor R.H."/>
            <person name="Hohn T.M."/>
        </authorList>
    </citation>
    <scope>FUNCTION</scope>
</reference>
<reference key="4">
    <citation type="journal article" date="2004" name="J. Am. Chem. Soc.">
        <title>Aristolochene synthase: mechanistic analysis of active site residues by site-directed mutagenesis.</title>
        <authorList>
            <person name="Felicetti B."/>
            <person name="Cane D.E."/>
        </authorList>
    </citation>
    <scope>FUNCTION</scope>
</reference>
<reference key="5">
    <citation type="journal article" date="2014" name="Fungal Genet. Biol.">
        <title>Molecular characterization of the PR-toxin gene cluster in Penicillium roqueforti and Penicillium chrysogenum: cross talk of secondary metabolite pathways.</title>
        <authorList>
            <person name="Hidalgo P.I."/>
            <person name="Ullan R.V."/>
            <person name="Albillos S.M."/>
            <person name="Montero O."/>
            <person name="Fernandez-Bodega M.A."/>
            <person name="Garcia-Estrada C."/>
            <person name="Fernandez-Aguado M."/>
            <person name="Martin J.F."/>
        </authorList>
    </citation>
    <scope>FUNCTION</scope>
    <scope>DISRUPTION PHENOTYPE</scope>
    <scope>PATHWAY</scope>
</reference>
<reference key="6">
    <citation type="journal article" date="2015" name="Angew. Chem. Int. Ed.">
        <title>Identification of intermediates in the biosynthesis of PR toxin by Penicillium roqueforti.</title>
        <authorList>
            <person name="Riclea R."/>
            <person name="Dickschat J.S."/>
        </authorList>
    </citation>
    <scope>FUNCTION</scope>
</reference>
<reference key="7">
    <citation type="journal article" date="2017" name="Appl. Microbiol. Biotechnol.">
        <title>Penicillium roqueforti PR toxin gene cluster characterization.</title>
        <authorList>
            <person name="Hidalgo P.I."/>
            <person name="Poirier E."/>
            <person name="Ullan R.V."/>
            <person name="Piqueras J."/>
            <person name="Meslet-Cladiere L."/>
            <person name="Coton E."/>
            <person name="Coton M."/>
        </authorList>
    </citation>
    <scope>FUNCTION</scope>
    <scope>PATHWAY</scope>
</reference>
<dbReference type="EC" id="1.-.-.-" evidence="14"/>
<dbReference type="EMBL" id="HG792016">
    <property type="protein sequence ID" value="CDM31316.1"/>
    <property type="molecule type" value="Genomic_DNA"/>
</dbReference>
<dbReference type="SMR" id="W6Q5R7"/>
<dbReference type="STRING" id="1365484.W6Q5R7"/>
<dbReference type="GlyCosmos" id="W6Q5R7">
    <property type="glycosylation" value="6 sites, No reported glycans"/>
</dbReference>
<dbReference type="OMA" id="VRTQGHM"/>
<dbReference type="OrthoDB" id="2151789at2759"/>
<dbReference type="Proteomes" id="UP000030686">
    <property type="component" value="Unassembled WGS sequence"/>
</dbReference>
<dbReference type="GO" id="GO:0071949">
    <property type="term" value="F:FAD binding"/>
    <property type="evidence" value="ECO:0007669"/>
    <property type="project" value="InterPro"/>
</dbReference>
<dbReference type="GO" id="GO:0016491">
    <property type="term" value="F:oxidoreductase activity"/>
    <property type="evidence" value="ECO:0007669"/>
    <property type="project" value="UniProtKB-KW"/>
</dbReference>
<dbReference type="Gene3D" id="3.30.465.10">
    <property type="match status" value="1"/>
</dbReference>
<dbReference type="InterPro" id="IPR016166">
    <property type="entry name" value="FAD-bd_PCMH"/>
</dbReference>
<dbReference type="InterPro" id="IPR036318">
    <property type="entry name" value="FAD-bd_PCMH-like_sf"/>
</dbReference>
<dbReference type="InterPro" id="IPR016169">
    <property type="entry name" value="FAD-bd_PCMH_sub2"/>
</dbReference>
<dbReference type="InterPro" id="IPR050416">
    <property type="entry name" value="FAD-linked_Oxidoreductase"/>
</dbReference>
<dbReference type="InterPro" id="IPR006094">
    <property type="entry name" value="Oxid_FAD_bind_N"/>
</dbReference>
<dbReference type="PANTHER" id="PTHR42973">
    <property type="entry name" value="BINDING OXIDOREDUCTASE, PUTATIVE (AFU_ORTHOLOGUE AFUA_1G17690)-RELATED"/>
    <property type="match status" value="1"/>
</dbReference>
<dbReference type="PANTHER" id="PTHR42973:SF53">
    <property type="entry name" value="FAD-BINDING PCMH-TYPE DOMAIN-CONTAINING PROTEIN-RELATED"/>
    <property type="match status" value="1"/>
</dbReference>
<dbReference type="Pfam" id="PF01565">
    <property type="entry name" value="FAD_binding_4"/>
    <property type="match status" value="1"/>
</dbReference>
<dbReference type="SUPFAM" id="SSF56176">
    <property type="entry name" value="FAD-binding/transporter-associated domain-like"/>
    <property type="match status" value="1"/>
</dbReference>
<dbReference type="PROSITE" id="PS51387">
    <property type="entry name" value="FAD_PCMH"/>
    <property type="match status" value="1"/>
</dbReference>
<keyword id="KW-0274">FAD</keyword>
<keyword id="KW-0285">Flavoprotein</keyword>
<keyword id="KW-0325">Glycoprotein</keyword>
<keyword id="KW-0560">Oxidoreductase</keyword>
<keyword id="KW-1185">Reference proteome</keyword>
<keyword id="KW-0732">Signal</keyword>
<organism>
    <name type="scientific">Penicillium roqueforti (strain FM164)</name>
    <dbReference type="NCBI Taxonomy" id="1365484"/>
    <lineage>
        <taxon>Eukaryota</taxon>
        <taxon>Fungi</taxon>
        <taxon>Dikarya</taxon>
        <taxon>Ascomycota</taxon>
        <taxon>Pezizomycotina</taxon>
        <taxon>Eurotiomycetes</taxon>
        <taxon>Eurotiomycetidae</taxon>
        <taxon>Eurotiales</taxon>
        <taxon>Aspergillaceae</taxon>
        <taxon>Penicillium</taxon>
    </lineage>
</organism>
<proteinExistence type="inferred from homology"/>
<comment type="function">
    <text evidence="5 6 7 8 9 10">FAD-dependent monooxygenase; part of the gene cluster that mediates the biosynthesis of PR-toxin, a bicyclic sesquiterpene belonging to the eremophilane class and acting as a mycotoxin (PubMed:24239699, PubMed:27921136). The first step of the pathway is catalyzed by the aristolochene synthase which performs the cyclization of trans,trans-farnesyl diphosphate (FPP) to the bicyclic sesquiterpene aristolochene (PubMed:15186158, PubMed:24239699, PubMed:8440737). Following the formation of aristolochene, the non-oxygenated aristolochene is converted to the trioxygenated intermediate eremofortin B, via 7-epi-neopetasone (PubMed:24239699, PubMed:26274339). This conversion appears to involve three enzymes, a hydroxysterol oxidase-like enzyme, the quinone-oxidase prx3 that forms the quinone-type-structure in the bicyclic nucleus of aristolochene with the C8-oxo group and the C-3 hydroxyl group, and the P450 monooxygenase ORF6 that introduces the epoxide at the double bond between carbons 1 and 2 (PubMed:24239699, PubMed:27921136). No monoxy or dioxy-intermediates have been reported to be released to the broth, so these three early oxidative reactions may be coupled together (PubMed:24239699). Eremofortin B is further oxidized by another P450 monooxygenase, that introduces a second epoxide between carbons 7 and 11 prior to acetylation to eremofortin A by the acetyltransferase ORF8 (PubMed:16345540, PubMed:24239699, PubMed:27921136). The second epoxidation may be performed by a second P450 monooxygenase (PubMed:24239699). After the acetylation step, eremofortin A is converted to eremofortin C and then to PR-toxin (PubMed:24239699). First the conversion of eremofortin A to eremofortin C proceeds by oxidation of the side chain of the molecule at C-12 and is catalyzed by the short-chain oxidoreductase prx1 (PubMed:16345540, PubMed:24239699). The cytochrome P450 monooxygenase ORF6 is probably also involved in this step (PubMed:27921136). The primary alcohol formed at C-12 is finally oxidized by the short-chain alcohol dehydrogenase prx4 that forms PR-toxin (PubMed:16345540, PubMed:24239699).</text>
</comment>
<comment type="pathway">
    <text evidence="7 15">Sesquiterpene biosynthesis.</text>
</comment>
<comment type="disruption phenotype">
    <text evidence="7">Reduces the production of PR-toxin and leads to a large increase in mycophenolic acid production.</text>
</comment>
<comment type="similarity">
    <text evidence="13">Belongs to the oxygen-dependent FAD-linked oxidoreductase family.</text>
</comment>
<gene>
    <name evidence="11" type="primary">prx3</name>
    <name evidence="12" type="synonym">ORF3</name>
    <name type="ORF">PROQFM164_S02g001466</name>
</gene>
<sequence length="512" mass="54663">MLSLKAFLALSLSIHLSQGLVASVSHRRANACTELSRSYPDSTIHPGSSVFAEDVIEPWSQTCQTTPTCVFAPASAEEVAGGLAILRKADQTFAVRTQGHMPIPGAADISNGVLMVTTSLNSVQYADDSKSVVQIGAGNRWLDVYKVLAKDNLAVVGGRFGQVGVSGLLLGGGISYFNSDHGWGANSVVNYEVVLANGTVCAANAQQNSDLYWALKGGSFNFGIVTRFDLATFSVPYMWGGSAFYDASALDPLVNAYASYAVASGGSSDPAAHSDPSILYNVTTGEVSGYGIYMHRGDDPAPAALKNFTDIPSTFQDFRVGKTILGLENDTTPVNFGVGNRRQLFSSTALASSAEAVYLVNQTFFDVIAANPQIKTTTDLSVTNTYQLFTPGMIRAAKASGGDPIGLYDPLGNGVLAVLYGGNWADAKDDEIIYKFFQDMIDELDNRAKKLGLYYDFVYLNDAAPTQTKDIFQKFSNGTALPKLREIAESYDPDQVFQTLTPGGFKLINSPA</sequence>
<accession>W6Q5R7</accession>